<feature type="chain" id="PRO_0000264805" description="DNA repair protein RecO">
    <location>
        <begin position="1"/>
        <end position="247"/>
    </location>
</feature>
<proteinExistence type="inferred from homology"/>
<gene>
    <name evidence="1" type="primary">recO</name>
    <name type="ordered locus">BAB1_0684</name>
</gene>
<name>RECO_BRUA2</name>
<reference key="1">
    <citation type="journal article" date="2005" name="Infect. Immun.">
        <title>Whole-genome analyses of speciation events in pathogenic Brucellae.</title>
        <authorList>
            <person name="Chain P.S."/>
            <person name="Comerci D.J."/>
            <person name="Tolmasky M.E."/>
            <person name="Larimer F.W."/>
            <person name="Malfatti S.A."/>
            <person name="Vergez L.M."/>
            <person name="Aguero F."/>
            <person name="Land M.L."/>
            <person name="Ugalde R.A."/>
            <person name="Garcia E."/>
        </authorList>
    </citation>
    <scope>NUCLEOTIDE SEQUENCE [LARGE SCALE GENOMIC DNA]</scope>
    <source>
        <strain>2308</strain>
    </source>
</reference>
<protein>
    <recommendedName>
        <fullName evidence="1">DNA repair protein RecO</fullName>
    </recommendedName>
    <alternativeName>
        <fullName evidence="1">Recombination protein O</fullName>
    </alternativeName>
</protein>
<keyword id="KW-0227">DNA damage</keyword>
<keyword id="KW-0233">DNA recombination</keyword>
<keyword id="KW-0234">DNA repair</keyword>
<keyword id="KW-1185">Reference proteome</keyword>
<comment type="function">
    <text evidence="1">Involved in DNA repair and RecF pathway recombination.</text>
</comment>
<comment type="similarity">
    <text evidence="1">Belongs to the RecO family.</text>
</comment>
<sequence length="247" mass="27669">MEWRDEGVILGTRRHGETSAIVEVMTCGHGRHMGMVRGGRSRRMQPLLQPGNHVDVSWWARLDEHMGTFTIEPLSFAAARLIETPVALYGIQLAAAHLRLLPERDPHRGLYETLRLIIEHFDDPLAAGELLLRFEVMMLEELGFGLDLKECAATGRKDDLIYVSPKSGRAVCREAGAPWAEKLLSLPSFVNDTALRASCYDDLDRAFTMTGYFLMRHVWEPRAQTPPDSRSGFLNAVGRAINLSQAS</sequence>
<evidence type="ECO:0000255" key="1">
    <source>
        <dbReference type="HAMAP-Rule" id="MF_00201"/>
    </source>
</evidence>
<accession>Q2YMZ9</accession>
<dbReference type="EMBL" id="AM040264">
    <property type="protein sequence ID" value="CAJ10640.1"/>
    <property type="molecule type" value="Genomic_DNA"/>
</dbReference>
<dbReference type="RefSeq" id="WP_002963807.1">
    <property type="nucleotide sequence ID" value="NZ_KN046823.1"/>
</dbReference>
<dbReference type="SMR" id="Q2YMZ9"/>
<dbReference type="STRING" id="359391.BAB1_0684"/>
<dbReference type="GeneID" id="93016931"/>
<dbReference type="KEGG" id="bmf:BAB1_0684"/>
<dbReference type="PATRIC" id="fig|359391.11.peg.2997"/>
<dbReference type="HOGENOM" id="CLU_086029_0_0_5"/>
<dbReference type="PhylomeDB" id="Q2YMZ9"/>
<dbReference type="Proteomes" id="UP000002719">
    <property type="component" value="Chromosome I"/>
</dbReference>
<dbReference type="GO" id="GO:0043590">
    <property type="term" value="C:bacterial nucleoid"/>
    <property type="evidence" value="ECO:0007669"/>
    <property type="project" value="TreeGrafter"/>
</dbReference>
<dbReference type="GO" id="GO:0006310">
    <property type="term" value="P:DNA recombination"/>
    <property type="evidence" value="ECO:0007669"/>
    <property type="project" value="UniProtKB-UniRule"/>
</dbReference>
<dbReference type="GO" id="GO:0006302">
    <property type="term" value="P:double-strand break repair"/>
    <property type="evidence" value="ECO:0007669"/>
    <property type="project" value="TreeGrafter"/>
</dbReference>
<dbReference type="Gene3D" id="2.40.50.140">
    <property type="entry name" value="Nucleic acid-binding proteins"/>
    <property type="match status" value="1"/>
</dbReference>
<dbReference type="Gene3D" id="1.20.1440.120">
    <property type="entry name" value="Recombination protein O, C-terminal domain"/>
    <property type="match status" value="1"/>
</dbReference>
<dbReference type="HAMAP" id="MF_00201">
    <property type="entry name" value="RecO"/>
    <property type="match status" value="1"/>
</dbReference>
<dbReference type="InterPro" id="IPR037278">
    <property type="entry name" value="ARFGAP/RecO"/>
</dbReference>
<dbReference type="InterPro" id="IPR022572">
    <property type="entry name" value="DNA_rep/recomb_RecO_N"/>
</dbReference>
<dbReference type="InterPro" id="IPR012340">
    <property type="entry name" value="NA-bd_OB-fold"/>
</dbReference>
<dbReference type="InterPro" id="IPR003717">
    <property type="entry name" value="RecO"/>
</dbReference>
<dbReference type="InterPro" id="IPR042242">
    <property type="entry name" value="RecO_C"/>
</dbReference>
<dbReference type="NCBIfam" id="TIGR00613">
    <property type="entry name" value="reco"/>
    <property type="match status" value="1"/>
</dbReference>
<dbReference type="PANTHER" id="PTHR33991">
    <property type="entry name" value="DNA REPAIR PROTEIN RECO"/>
    <property type="match status" value="1"/>
</dbReference>
<dbReference type="PANTHER" id="PTHR33991:SF1">
    <property type="entry name" value="DNA REPAIR PROTEIN RECO"/>
    <property type="match status" value="1"/>
</dbReference>
<dbReference type="Pfam" id="PF02565">
    <property type="entry name" value="RecO_C"/>
    <property type="match status" value="1"/>
</dbReference>
<dbReference type="Pfam" id="PF11967">
    <property type="entry name" value="RecO_N"/>
    <property type="match status" value="1"/>
</dbReference>
<dbReference type="SUPFAM" id="SSF57863">
    <property type="entry name" value="ArfGap/RecO-like zinc finger"/>
    <property type="match status" value="1"/>
</dbReference>
<dbReference type="SUPFAM" id="SSF50249">
    <property type="entry name" value="Nucleic acid-binding proteins"/>
    <property type="match status" value="1"/>
</dbReference>
<organism>
    <name type="scientific">Brucella abortus (strain 2308)</name>
    <dbReference type="NCBI Taxonomy" id="359391"/>
    <lineage>
        <taxon>Bacteria</taxon>
        <taxon>Pseudomonadati</taxon>
        <taxon>Pseudomonadota</taxon>
        <taxon>Alphaproteobacteria</taxon>
        <taxon>Hyphomicrobiales</taxon>
        <taxon>Brucellaceae</taxon>
        <taxon>Brucella/Ochrobactrum group</taxon>
        <taxon>Brucella</taxon>
    </lineage>
</organism>